<keyword id="KW-0150">Chloroplast</keyword>
<keyword id="KW-0934">Plastid</keyword>
<keyword id="KW-0687">Ribonucleoprotein</keyword>
<keyword id="KW-0689">Ribosomal protein</keyword>
<dbReference type="EMBL" id="AB295944">
    <property type="protein sequence ID" value="BAF64893.1"/>
    <property type="molecule type" value="Genomic_DNA"/>
</dbReference>
<dbReference type="EMBL" id="AP009569">
    <property type="protein sequence ID" value="BAH11261.1"/>
    <property type="molecule type" value="Genomic_DNA"/>
</dbReference>
<dbReference type="RefSeq" id="YP_002519751.1">
    <property type="nucleotide sequence ID" value="NC_011942.1"/>
</dbReference>
<dbReference type="SMR" id="A6BM48"/>
<dbReference type="GeneID" id="7368191"/>
<dbReference type="GO" id="GO:0009507">
    <property type="term" value="C:chloroplast"/>
    <property type="evidence" value="ECO:0007669"/>
    <property type="project" value="UniProtKB-SubCell"/>
</dbReference>
<dbReference type="GO" id="GO:1990904">
    <property type="term" value="C:ribonucleoprotein complex"/>
    <property type="evidence" value="ECO:0007669"/>
    <property type="project" value="UniProtKB-KW"/>
</dbReference>
<dbReference type="GO" id="GO:0005840">
    <property type="term" value="C:ribosome"/>
    <property type="evidence" value="ECO:0007669"/>
    <property type="project" value="UniProtKB-KW"/>
</dbReference>
<dbReference type="GO" id="GO:0003735">
    <property type="term" value="F:structural constituent of ribosome"/>
    <property type="evidence" value="ECO:0007669"/>
    <property type="project" value="InterPro"/>
</dbReference>
<dbReference type="GO" id="GO:0006412">
    <property type="term" value="P:translation"/>
    <property type="evidence" value="ECO:0007669"/>
    <property type="project" value="UniProtKB-UniRule"/>
</dbReference>
<dbReference type="HAMAP" id="MF_00251">
    <property type="entry name" value="Ribosomal_bL36"/>
    <property type="match status" value="1"/>
</dbReference>
<dbReference type="InterPro" id="IPR000473">
    <property type="entry name" value="Ribosomal_bL36"/>
</dbReference>
<dbReference type="InterPro" id="IPR035977">
    <property type="entry name" value="Ribosomal_bL36_sp"/>
</dbReference>
<dbReference type="NCBIfam" id="TIGR01022">
    <property type="entry name" value="rpmJ_bact"/>
    <property type="match status" value="1"/>
</dbReference>
<dbReference type="PANTHER" id="PTHR42888">
    <property type="entry name" value="50S RIBOSOMAL PROTEIN L36, CHLOROPLASTIC"/>
    <property type="match status" value="1"/>
</dbReference>
<dbReference type="PANTHER" id="PTHR42888:SF1">
    <property type="entry name" value="LARGE RIBOSOMAL SUBUNIT PROTEIN BL36C"/>
    <property type="match status" value="1"/>
</dbReference>
<dbReference type="Pfam" id="PF00444">
    <property type="entry name" value="Ribosomal_L36"/>
    <property type="match status" value="1"/>
</dbReference>
<dbReference type="SUPFAM" id="SSF57840">
    <property type="entry name" value="Ribosomal protein L36"/>
    <property type="match status" value="1"/>
</dbReference>
<dbReference type="PROSITE" id="PS00828">
    <property type="entry name" value="RIBOSOMAL_L36"/>
    <property type="match status" value="1"/>
</dbReference>
<geneLocation type="chloroplast"/>
<organism>
    <name type="scientific">Gnetum parvifolium</name>
    <name type="common">Small-leaved jointfir</name>
    <name type="synonym">Gnetum scandens var. parvifolium</name>
    <dbReference type="NCBI Taxonomy" id="33153"/>
    <lineage>
        <taxon>Eukaryota</taxon>
        <taxon>Viridiplantae</taxon>
        <taxon>Streptophyta</taxon>
        <taxon>Embryophyta</taxon>
        <taxon>Tracheophyta</taxon>
        <taxon>Spermatophyta</taxon>
        <taxon>Gnetopsida</taxon>
        <taxon>Gnetidae</taxon>
        <taxon>Gnetales</taxon>
        <taxon>Gnetaceae</taxon>
        <taxon>Gnetum</taxon>
    </lineage>
</organism>
<comment type="subcellular location">
    <subcellularLocation>
        <location>Plastid</location>
        <location>Chloroplast</location>
    </subcellularLocation>
</comment>
<comment type="similarity">
    <text evidence="1">Belongs to the bacterial ribosomal protein bL36 family.</text>
</comment>
<evidence type="ECO:0000255" key="1">
    <source>
        <dbReference type="HAMAP-Rule" id="MF_00251"/>
    </source>
</evidence>
<evidence type="ECO:0000305" key="2"/>
<accession>A6BM48</accession>
<accession>B7ZI81</accession>
<proteinExistence type="inferred from homology"/>
<reference key="1">
    <citation type="journal article" date="2007" name="Mol. Biol. Evol.">
        <title>Chloroplast genome (cpDNA) of Cycas taitungensis and 56 cp protein-coding genes of Gnetum parvifolium: insights into cpDNA evolution and phylogeny of extant seed plants.</title>
        <authorList>
            <person name="Wu C.-S."/>
            <person name="Wang Y.-N."/>
            <person name="Liu S.-M."/>
            <person name="Chaw S.-M."/>
        </authorList>
    </citation>
    <scope>NUCLEOTIDE SEQUENCE [LARGE SCALE GENOMIC DNA]</scope>
</reference>
<reference key="2">
    <citation type="journal article" date="2009" name="Mol. Phylogenet. Evol.">
        <title>Evolution of reduced and compact chloroplast genomes (cpDNAs) in gnetophytes: Selection toward a lower-cost strategy.</title>
        <authorList>
            <person name="Wu C.-S."/>
            <person name="Lai Y.-T."/>
            <person name="Lin C.-P."/>
            <person name="Wang Y.-N."/>
            <person name="Chaw S.-M."/>
        </authorList>
    </citation>
    <scope>NUCLEOTIDE SEQUENCE [LARGE SCALE GENOMIC DNA]</scope>
</reference>
<protein>
    <recommendedName>
        <fullName evidence="1">Large ribosomal subunit protein bL36c</fullName>
    </recommendedName>
    <alternativeName>
        <fullName evidence="2">50S ribosomal protein L36, chloroplastic</fullName>
    </alternativeName>
</protein>
<sequence>MKVRASVRKICSKCQLIWRGKRLSVVCVNPRHKQKQG</sequence>
<gene>
    <name evidence="1" type="primary">rpl36</name>
</gene>
<feature type="chain" id="PRO_0000344760" description="Large ribosomal subunit protein bL36c">
    <location>
        <begin position="1"/>
        <end position="37"/>
    </location>
</feature>
<name>RK36_GNEPA</name>